<proteinExistence type="inferred from homology"/>
<dbReference type="EC" id="3.6.4.-" evidence="1"/>
<dbReference type="EMBL" id="CP000926">
    <property type="protein sequence ID" value="ABZ00161.1"/>
    <property type="molecule type" value="Genomic_DNA"/>
</dbReference>
<dbReference type="RefSeq" id="WP_012273834.1">
    <property type="nucleotide sequence ID" value="NC_010322.1"/>
</dbReference>
<dbReference type="SMR" id="B0KU95"/>
<dbReference type="KEGG" id="ppg:PputGB1_4272"/>
<dbReference type="eggNOG" id="COG0553">
    <property type="taxonomic scope" value="Bacteria"/>
</dbReference>
<dbReference type="HOGENOM" id="CLU_011520_0_0_6"/>
<dbReference type="Proteomes" id="UP000002157">
    <property type="component" value="Chromosome"/>
</dbReference>
<dbReference type="GO" id="GO:0005524">
    <property type="term" value="F:ATP binding"/>
    <property type="evidence" value="ECO:0007669"/>
    <property type="project" value="UniProtKB-UniRule"/>
</dbReference>
<dbReference type="GO" id="GO:0003677">
    <property type="term" value="F:DNA binding"/>
    <property type="evidence" value="ECO:0007669"/>
    <property type="project" value="UniProtKB-KW"/>
</dbReference>
<dbReference type="GO" id="GO:0004386">
    <property type="term" value="F:helicase activity"/>
    <property type="evidence" value="ECO:0007669"/>
    <property type="project" value="UniProtKB-UniRule"/>
</dbReference>
<dbReference type="GO" id="GO:0016817">
    <property type="term" value="F:hydrolase activity, acting on acid anhydrides"/>
    <property type="evidence" value="ECO:0007669"/>
    <property type="project" value="InterPro"/>
</dbReference>
<dbReference type="GO" id="GO:0006355">
    <property type="term" value="P:regulation of DNA-templated transcription"/>
    <property type="evidence" value="ECO:0007669"/>
    <property type="project" value="UniProtKB-UniRule"/>
</dbReference>
<dbReference type="CDD" id="cd18011">
    <property type="entry name" value="DEXDc_RapA"/>
    <property type="match status" value="1"/>
</dbReference>
<dbReference type="CDD" id="cd18793">
    <property type="entry name" value="SF2_C_SNF"/>
    <property type="match status" value="1"/>
</dbReference>
<dbReference type="Gene3D" id="2.30.30.140">
    <property type="match status" value="1"/>
</dbReference>
<dbReference type="Gene3D" id="2.30.30.930">
    <property type="match status" value="1"/>
</dbReference>
<dbReference type="Gene3D" id="3.30.360.80">
    <property type="match status" value="1"/>
</dbReference>
<dbReference type="Gene3D" id="6.10.140.1500">
    <property type="match status" value="1"/>
</dbReference>
<dbReference type="Gene3D" id="6.10.140.2230">
    <property type="match status" value="1"/>
</dbReference>
<dbReference type="Gene3D" id="3.40.50.300">
    <property type="entry name" value="P-loop containing nucleotide triphosphate hydrolases"/>
    <property type="match status" value="1"/>
</dbReference>
<dbReference type="Gene3D" id="3.40.50.10810">
    <property type="entry name" value="Tandem AAA-ATPase domain"/>
    <property type="match status" value="1"/>
</dbReference>
<dbReference type="HAMAP" id="MF_01821">
    <property type="entry name" value="Helicase_RapA"/>
    <property type="match status" value="1"/>
</dbReference>
<dbReference type="InterPro" id="IPR014001">
    <property type="entry name" value="Helicase_ATP-bd"/>
</dbReference>
<dbReference type="InterPro" id="IPR001650">
    <property type="entry name" value="Helicase_C-like"/>
</dbReference>
<dbReference type="InterPro" id="IPR023949">
    <property type="entry name" value="Helicase_RapA"/>
</dbReference>
<dbReference type="InterPro" id="IPR027417">
    <property type="entry name" value="P-loop_NTPase"/>
</dbReference>
<dbReference type="InterPro" id="IPR022737">
    <property type="entry name" value="RapA_C"/>
</dbReference>
<dbReference type="InterPro" id="IPR038718">
    <property type="entry name" value="SNF2-like_sf"/>
</dbReference>
<dbReference type="InterPro" id="IPR049730">
    <property type="entry name" value="SNF2/RAD54-like_C"/>
</dbReference>
<dbReference type="InterPro" id="IPR000330">
    <property type="entry name" value="SNF2_N"/>
</dbReference>
<dbReference type="InterPro" id="IPR040765">
    <property type="entry name" value="Tudor_1_RapA"/>
</dbReference>
<dbReference type="InterPro" id="IPR040766">
    <property type="entry name" value="Tudor_2_RapA"/>
</dbReference>
<dbReference type="NCBIfam" id="NF003426">
    <property type="entry name" value="PRK04914.1"/>
    <property type="match status" value="1"/>
</dbReference>
<dbReference type="PANTHER" id="PTHR45766">
    <property type="entry name" value="DNA ANNEALING HELICASE AND ENDONUCLEASE ZRANB3 FAMILY MEMBER"/>
    <property type="match status" value="1"/>
</dbReference>
<dbReference type="PANTHER" id="PTHR45766:SF6">
    <property type="entry name" value="SWI_SNF-RELATED MATRIX-ASSOCIATED ACTIN-DEPENDENT REGULATOR OF CHROMATIN SUBFAMILY A-LIKE PROTEIN 1"/>
    <property type="match status" value="1"/>
</dbReference>
<dbReference type="Pfam" id="PF00271">
    <property type="entry name" value="Helicase_C"/>
    <property type="match status" value="1"/>
</dbReference>
<dbReference type="Pfam" id="PF12137">
    <property type="entry name" value="RapA_C"/>
    <property type="match status" value="1"/>
</dbReference>
<dbReference type="Pfam" id="PF00176">
    <property type="entry name" value="SNF2-rel_dom"/>
    <property type="match status" value="1"/>
</dbReference>
<dbReference type="Pfam" id="PF18339">
    <property type="entry name" value="Tudor_1_RapA"/>
    <property type="match status" value="1"/>
</dbReference>
<dbReference type="Pfam" id="PF18337">
    <property type="entry name" value="Tudor_RapA"/>
    <property type="match status" value="1"/>
</dbReference>
<dbReference type="SMART" id="SM00487">
    <property type="entry name" value="DEXDc"/>
    <property type="match status" value="1"/>
</dbReference>
<dbReference type="SMART" id="SM00490">
    <property type="entry name" value="HELICc"/>
    <property type="match status" value="1"/>
</dbReference>
<dbReference type="SUPFAM" id="SSF52540">
    <property type="entry name" value="P-loop containing nucleoside triphosphate hydrolases"/>
    <property type="match status" value="2"/>
</dbReference>
<dbReference type="PROSITE" id="PS51192">
    <property type="entry name" value="HELICASE_ATP_BIND_1"/>
    <property type="match status" value="1"/>
</dbReference>
<dbReference type="PROSITE" id="PS51194">
    <property type="entry name" value="HELICASE_CTER"/>
    <property type="match status" value="1"/>
</dbReference>
<evidence type="ECO:0000255" key="1">
    <source>
        <dbReference type="HAMAP-Rule" id="MF_01821"/>
    </source>
</evidence>
<organism>
    <name type="scientific">Pseudomonas putida (strain GB-1)</name>
    <dbReference type="NCBI Taxonomy" id="76869"/>
    <lineage>
        <taxon>Bacteria</taxon>
        <taxon>Pseudomonadati</taxon>
        <taxon>Pseudomonadota</taxon>
        <taxon>Gammaproteobacteria</taxon>
        <taxon>Pseudomonadales</taxon>
        <taxon>Pseudomonadaceae</taxon>
        <taxon>Pseudomonas</taxon>
    </lineage>
</organism>
<reference key="1">
    <citation type="submission" date="2008-01" db="EMBL/GenBank/DDBJ databases">
        <title>Complete sequence of Pseudomonas putida GB-1.</title>
        <authorList>
            <consortium name="US DOE Joint Genome Institute"/>
            <person name="Copeland A."/>
            <person name="Lucas S."/>
            <person name="Lapidus A."/>
            <person name="Barry K."/>
            <person name="Glavina del Rio T."/>
            <person name="Dalin E."/>
            <person name="Tice H."/>
            <person name="Pitluck S."/>
            <person name="Bruce D."/>
            <person name="Goodwin L."/>
            <person name="Chertkov O."/>
            <person name="Brettin T."/>
            <person name="Detter J.C."/>
            <person name="Han C."/>
            <person name="Kuske C.R."/>
            <person name="Schmutz J."/>
            <person name="Larimer F."/>
            <person name="Land M."/>
            <person name="Hauser L."/>
            <person name="Kyrpides N."/>
            <person name="Kim E."/>
            <person name="McCarthy J.K."/>
            <person name="Richardson P."/>
        </authorList>
    </citation>
    <scope>NUCLEOTIDE SEQUENCE [LARGE SCALE GENOMIC DNA]</scope>
    <source>
        <strain>GB-1</strain>
    </source>
</reference>
<gene>
    <name evidence="1" type="primary">rapA</name>
    <name type="ordered locus">PputGB1_4272</name>
</gene>
<protein>
    <recommendedName>
        <fullName evidence="1">RNA polymerase-associated protein RapA</fullName>
        <ecNumber evidence="1">3.6.4.-</ecNumber>
    </recommendedName>
    <alternativeName>
        <fullName evidence="1">ATP-dependent helicase HepA</fullName>
    </alternativeName>
</protein>
<name>RAPA_PSEPG</name>
<feature type="chain" id="PRO_1000088369" description="RNA polymerase-associated protein RapA">
    <location>
        <begin position="1"/>
        <end position="948"/>
    </location>
</feature>
<feature type="domain" description="Helicase ATP-binding" evidence="1">
    <location>
        <begin position="164"/>
        <end position="332"/>
    </location>
</feature>
<feature type="domain" description="Helicase C-terminal" evidence="1">
    <location>
        <begin position="473"/>
        <end position="627"/>
    </location>
</feature>
<feature type="short sequence motif" description="DEAH box">
    <location>
        <begin position="278"/>
        <end position="281"/>
    </location>
</feature>
<feature type="binding site" evidence="1">
    <location>
        <begin position="177"/>
        <end position="184"/>
    </location>
    <ligand>
        <name>ATP</name>
        <dbReference type="ChEBI" id="CHEBI:30616"/>
    </ligand>
</feature>
<comment type="function">
    <text evidence="1">Transcription regulator that activates transcription by stimulating RNA polymerase (RNAP) recycling in case of stress conditions such as supercoiled DNA or high salt concentrations. Probably acts by releasing the RNAP, when it is trapped or immobilized on tightly supercoiled DNA. Does not activate transcription on linear DNA. Probably not involved in DNA repair.</text>
</comment>
<comment type="subunit">
    <text evidence="1">Interacts with the RNAP. Has a higher affinity for the core RNAP than for the holoenzyme. Its ATPase activity is stimulated by binding to RNAP.</text>
</comment>
<comment type="similarity">
    <text evidence="1">Belongs to the SNF2/RAD54 helicase family. RapA subfamily.</text>
</comment>
<keyword id="KW-0010">Activator</keyword>
<keyword id="KW-0067">ATP-binding</keyword>
<keyword id="KW-0238">DNA-binding</keyword>
<keyword id="KW-0347">Helicase</keyword>
<keyword id="KW-0378">Hydrolase</keyword>
<keyword id="KW-0547">Nucleotide-binding</keyword>
<keyword id="KW-0804">Transcription</keyword>
<keyword id="KW-0805">Transcription regulation</keyword>
<accession>B0KU95</accession>
<sequence length="948" mass="106030">MAQQYQPGQRWISDSEAELGLGTILAQDGRLLTVLYPATGDTRQYSLRNAPLTRVRFSPGDQITHFEGWKLTVREVEDIDGLMVYHGLDGQNQPRTLPETQLSNFIQFRLASDRLFAGQIDPLSWFSLRYNTLQHTSKQMQSALWGLGGCRAQPIAHQLHIAREVADRSAPRVLLADEVGLGKTIEAGLVIHRQLLSGRANRVLILVPENLQHQWLVEMRRRFNLQVALFDAERFIESDASNPFEDAQLALVALEWLVDDEKAQDALFAAGWDLMVVDEAHHLVWHEDQASTEYSLVEQLAQVIPGVLLLTATPEQLGQDSHFARLRLLDPNRFHDLAAFRAESEHYRPVAEAVQELLDEGRLSPKAHATIQGFLGAEGEALLAAVNDGDTQASARLIRELLDRHGTGRVLFRNTRAAIQGFPERQLHPYPLATPEQYRDLPAGEHAELYPEVAFQAQGEAADDERWWRFDPRVDWLIDTLKMLKRTKVLVICAHAETAMDLEDALRVRSGIPASVFHEGMSILERDRAAAYFADEEFGAQVLICSEIGSEGRNFQFAHHLVMFDLPAHPDLLEQRIGRLDRIGQKHTIQLHIPYLQDSPQERLFQWYHEGLNAFLNTCPTGNALQHQFGPRLLPLLEGGESKAWDALVADARGERERLEAELHTGRDRLLELNSGGAGEGQALVEDILEQDDQFALPIYMETLFDAFGIDSEDHSENALILKPSEKMLDASFPLGDDEGVTITYDRAQALSREDMQFLTWEHPMVQGGMDLVLSGSMGNTAVALIKNKALKPGTVLLELLFVSEVVAPRSLQLGRYLPPAALRCLLDANGNDLASRVAFETLNDQLESVPRASANKFVQAQRDVLAKRISGGEEKILPIHVERVAEAQRRLAAEADEELARLVALQAVNPSVRDSEIDALRKQREDGLAMLEKAALRLEAIRVLVAG</sequence>